<feature type="chain" id="PRO_1000099870" description="Probable malate:quinone oxidoreductase">
    <location>
        <begin position="1"/>
        <end position="548"/>
    </location>
</feature>
<feature type="region of interest" description="Disordered" evidence="2">
    <location>
        <begin position="521"/>
        <end position="548"/>
    </location>
</feature>
<feature type="compositionally biased region" description="Low complexity" evidence="2">
    <location>
        <begin position="530"/>
        <end position="541"/>
    </location>
</feature>
<keyword id="KW-0274">FAD</keyword>
<keyword id="KW-0285">Flavoprotein</keyword>
<keyword id="KW-0560">Oxidoreductase</keyword>
<keyword id="KW-0816">Tricarboxylic acid cycle</keyword>
<protein>
    <recommendedName>
        <fullName evidence="1">Probable malate:quinone oxidoreductase</fullName>
        <ecNumber evidence="1">1.1.5.4</ecNumber>
    </recommendedName>
    <alternativeName>
        <fullName evidence="1">MQO</fullName>
    </alternativeName>
    <alternativeName>
        <fullName evidence="1">Malate dehydrogenase [quinone]</fullName>
    </alternativeName>
</protein>
<evidence type="ECO:0000255" key="1">
    <source>
        <dbReference type="HAMAP-Rule" id="MF_00212"/>
    </source>
</evidence>
<evidence type="ECO:0000256" key="2">
    <source>
        <dbReference type="SAM" id="MobiDB-lite"/>
    </source>
</evidence>
<accession>B1X8A6</accession>
<comment type="catalytic activity">
    <reaction evidence="1">
        <text>(S)-malate + a quinone = a quinol + oxaloacetate</text>
        <dbReference type="Rhea" id="RHEA:46012"/>
        <dbReference type="ChEBI" id="CHEBI:15589"/>
        <dbReference type="ChEBI" id="CHEBI:16452"/>
        <dbReference type="ChEBI" id="CHEBI:24646"/>
        <dbReference type="ChEBI" id="CHEBI:132124"/>
        <dbReference type="EC" id="1.1.5.4"/>
    </reaction>
</comment>
<comment type="cofactor">
    <cofactor evidence="1">
        <name>FAD</name>
        <dbReference type="ChEBI" id="CHEBI:57692"/>
    </cofactor>
</comment>
<comment type="pathway">
    <text evidence="1">Carbohydrate metabolism; tricarboxylic acid cycle; oxaloacetate from (S)-malate (quinone route): step 1/1.</text>
</comment>
<comment type="similarity">
    <text evidence="1">Belongs to the MQO family.</text>
</comment>
<organism>
    <name type="scientific">Escherichia coli (strain K12 / DH10B)</name>
    <dbReference type="NCBI Taxonomy" id="316385"/>
    <lineage>
        <taxon>Bacteria</taxon>
        <taxon>Pseudomonadati</taxon>
        <taxon>Pseudomonadota</taxon>
        <taxon>Gammaproteobacteria</taxon>
        <taxon>Enterobacterales</taxon>
        <taxon>Enterobacteriaceae</taxon>
        <taxon>Escherichia</taxon>
    </lineage>
</organism>
<proteinExistence type="inferred from homology"/>
<gene>
    <name evidence="1" type="primary">mqo</name>
    <name type="ordered locus">ECDH10B_2367</name>
</gene>
<dbReference type="EC" id="1.1.5.4" evidence="1"/>
<dbReference type="EMBL" id="CP000948">
    <property type="protein sequence ID" value="ACB03372.1"/>
    <property type="molecule type" value="Genomic_DNA"/>
</dbReference>
<dbReference type="RefSeq" id="WP_000758077.1">
    <property type="nucleotide sequence ID" value="NC_010473.1"/>
</dbReference>
<dbReference type="SMR" id="B1X8A6"/>
<dbReference type="KEGG" id="ecd:ECDH10B_2367"/>
<dbReference type="HOGENOM" id="CLU_028151_0_0_6"/>
<dbReference type="UniPathway" id="UPA00223">
    <property type="reaction ID" value="UER01008"/>
</dbReference>
<dbReference type="GO" id="GO:0047545">
    <property type="term" value="F:2-hydroxyglutarate dehydrogenase activity"/>
    <property type="evidence" value="ECO:0007669"/>
    <property type="project" value="TreeGrafter"/>
</dbReference>
<dbReference type="GO" id="GO:0008924">
    <property type="term" value="F:L-malate dehydrogenase (quinone) activity"/>
    <property type="evidence" value="ECO:0007669"/>
    <property type="project" value="UniProtKB-UniRule"/>
</dbReference>
<dbReference type="GO" id="GO:0006099">
    <property type="term" value="P:tricarboxylic acid cycle"/>
    <property type="evidence" value="ECO:0007669"/>
    <property type="project" value="UniProtKB-UniRule"/>
</dbReference>
<dbReference type="Gene3D" id="3.30.9.10">
    <property type="entry name" value="D-Amino Acid Oxidase, subunit A, domain 2"/>
    <property type="match status" value="1"/>
</dbReference>
<dbReference type="Gene3D" id="3.50.50.60">
    <property type="entry name" value="FAD/NAD(P)-binding domain"/>
    <property type="match status" value="1"/>
</dbReference>
<dbReference type="HAMAP" id="MF_00212">
    <property type="entry name" value="MQO"/>
    <property type="match status" value="1"/>
</dbReference>
<dbReference type="InterPro" id="IPR036188">
    <property type="entry name" value="FAD/NAD-bd_sf"/>
</dbReference>
<dbReference type="InterPro" id="IPR006231">
    <property type="entry name" value="MQO"/>
</dbReference>
<dbReference type="NCBIfam" id="TIGR01320">
    <property type="entry name" value="mal_quin_oxido"/>
    <property type="match status" value="1"/>
</dbReference>
<dbReference type="NCBIfam" id="NF003603">
    <property type="entry name" value="PRK05257.1-1"/>
    <property type="match status" value="1"/>
</dbReference>
<dbReference type="NCBIfam" id="NF003605">
    <property type="entry name" value="PRK05257.1-4"/>
    <property type="match status" value="1"/>
</dbReference>
<dbReference type="NCBIfam" id="NF003606">
    <property type="entry name" value="PRK05257.2-1"/>
    <property type="match status" value="1"/>
</dbReference>
<dbReference type="NCBIfam" id="NF003608">
    <property type="entry name" value="PRK05257.2-4"/>
    <property type="match status" value="1"/>
</dbReference>
<dbReference type="NCBIfam" id="NF003611">
    <property type="entry name" value="PRK05257.3-2"/>
    <property type="match status" value="1"/>
</dbReference>
<dbReference type="NCBIfam" id="NF009875">
    <property type="entry name" value="PRK13339.1"/>
    <property type="match status" value="1"/>
</dbReference>
<dbReference type="PANTHER" id="PTHR43104">
    <property type="entry name" value="L-2-HYDROXYGLUTARATE DEHYDROGENASE, MITOCHONDRIAL"/>
    <property type="match status" value="1"/>
</dbReference>
<dbReference type="PANTHER" id="PTHR43104:SF2">
    <property type="entry name" value="L-2-HYDROXYGLUTARATE DEHYDROGENASE, MITOCHONDRIAL"/>
    <property type="match status" value="1"/>
</dbReference>
<dbReference type="Pfam" id="PF06039">
    <property type="entry name" value="Mqo"/>
    <property type="match status" value="1"/>
</dbReference>
<dbReference type="SUPFAM" id="SSF51905">
    <property type="entry name" value="FAD/NAD(P)-binding domain"/>
    <property type="match status" value="1"/>
</dbReference>
<reference key="1">
    <citation type="journal article" date="2008" name="J. Bacteriol.">
        <title>The complete genome sequence of Escherichia coli DH10B: insights into the biology of a laboratory workhorse.</title>
        <authorList>
            <person name="Durfee T."/>
            <person name="Nelson R."/>
            <person name="Baldwin S."/>
            <person name="Plunkett G. III"/>
            <person name="Burland V."/>
            <person name="Mau B."/>
            <person name="Petrosino J.F."/>
            <person name="Qin X."/>
            <person name="Muzny D.M."/>
            <person name="Ayele M."/>
            <person name="Gibbs R.A."/>
            <person name="Csorgo B."/>
            <person name="Posfai G."/>
            <person name="Weinstock G.M."/>
            <person name="Blattner F.R."/>
        </authorList>
    </citation>
    <scope>NUCLEOTIDE SEQUENCE [LARGE SCALE GENOMIC DNA]</scope>
    <source>
        <strain>K12 / DH10B</strain>
    </source>
</reference>
<name>MQO_ECODH</name>
<sequence length="548" mass="60230">MKKVTAMLFSMAVGLNAVSMAAKAKASEEQETDVLLIGGGIMSATLGTYLRELEPEWSMTMVERLEGVAQESSNGWNNAGTGHSALMELNYTPQNADGSISIEKAVAINEAFQISRQFWAHQVERGVLRTPRSFINTVPHMSFVWGEDNVNFLRARYAALQQSSLFRGMRYSEDHAQIKEWAPLVMEGRDPQQKVAATRTEIGTDVNYGEITRQLIASLQKKSNFSLQLSSEVRALKRNDDNTWTVTVADLKNGTAQNIRAKFVFIGAGGAALKLLQESGIPEAKDYAGFPVGGQFLVSENPDVVNHHLAKVYGKASVGAPPMSVPHIDTRVLDGKRVVLFGPFATFSTKFLKNGSLWDLMSSTTTSNVMPMMHVGLDNFDLVKYLVSQVMLSEEDRFEALKEYYPQAKKEDWRLWQAGQRVQIIKRDAEKGGVLRLGTEVVSDQQGTIAALLGASPGASTAAPIMLNLLEKVFGDRVSSPQWQATLKAIVPSYGRKLNGDVAATERELQYTSEVLGLNYDKPQAADSTPKPQLKPQPVQKEVADIAL</sequence>